<comment type="function">
    <text evidence="1">Non-catalytic component of the exosome, which is a complex involved in RNA degradation. Increases the RNA binding and the efficiency of RNA degradation. Confers strong poly(A) specificity to the exosome.</text>
</comment>
<comment type="subunit">
    <text evidence="1">Component of the archaeal exosome complex. Forms a trimer of Rrp4 and/or Csl4 subunits. The trimer associates with a hexameric ring-like arrangement composed of 3 Rrp41-Rrp42 heterodimers.</text>
</comment>
<comment type="subcellular location">
    <subcellularLocation>
        <location evidence="1">Cytoplasm</location>
    </subcellularLocation>
</comment>
<comment type="similarity">
    <text evidence="1">Belongs to the RRP4 family.</text>
</comment>
<keyword id="KW-0963">Cytoplasm</keyword>
<keyword id="KW-0271">Exosome</keyword>
<keyword id="KW-0694">RNA-binding</keyword>
<reference key="1">
    <citation type="journal article" date="2003" name="Mol. Microbiol.">
        <title>An integrated analysis of the genome of the hyperthermophilic archaeon Pyrococcus abyssi.</title>
        <authorList>
            <person name="Cohen G.N."/>
            <person name="Barbe V."/>
            <person name="Flament D."/>
            <person name="Galperin M."/>
            <person name="Heilig R."/>
            <person name="Lecompte O."/>
            <person name="Poch O."/>
            <person name="Prieur D."/>
            <person name="Querellou J."/>
            <person name="Ripp R."/>
            <person name="Thierry J.-C."/>
            <person name="Van der Oost J."/>
            <person name="Weissenbach J."/>
            <person name="Zivanovic Y."/>
            <person name="Forterre P."/>
        </authorList>
    </citation>
    <scope>NUCLEOTIDE SEQUENCE [LARGE SCALE GENOMIC DNA]</scope>
    <source>
        <strain>GE5 / Orsay</strain>
    </source>
</reference>
<reference key="2">
    <citation type="journal article" date="2012" name="Curr. Microbiol.">
        <title>Re-annotation of two hyperthermophilic archaea Pyrococcus abyssi GE5 and Pyrococcus furiosus DSM 3638.</title>
        <authorList>
            <person name="Gao J."/>
            <person name="Wang J."/>
        </authorList>
    </citation>
    <scope>GENOME REANNOTATION</scope>
    <source>
        <strain>GE5 / Orsay</strain>
    </source>
</reference>
<accession>Q9V120</accession>
<accession>G8ZJ74</accession>
<gene>
    <name evidence="1" type="primary">rrp4</name>
    <name type="ordered locus">PYRAB06090</name>
    <name type="ORF">PAB0419</name>
</gene>
<name>RRP4_PYRAB</name>
<organism>
    <name type="scientific">Pyrococcus abyssi (strain GE5 / Orsay)</name>
    <dbReference type="NCBI Taxonomy" id="272844"/>
    <lineage>
        <taxon>Archaea</taxon>
        <taxon>Methanobacteriati</taxon>
        <taxon>Methanobacteriota</taxon>
        <taxon>Thermococci</taxon>
        <taxon>Thermococcales</taxon>
        <taxon>Thermococcaceae</taxon>
        <taxon>Pyrococcus</taxon>
    </lineage>
</organism>
<dbReference type="EMBL" id="AJ248284">
    <property type="protein sequence ID" value="CAB49531.1"/>
    <property type="molecule type" value="Genomic_DNA"/>
</dbReference>
<dbReference type="EMBL" id="HE613800">
    <property type="protein sequence ID" value="CCE70001.1"/>
    <property type="molecule type" value="Genomic_DNA"/>
</dbReference>
<dbReference type="PIR" id="D75181">
    <property type="entry name" value="D75181"/>
</dbReference>
<dbReference type="RefSeq" id="WP_010867733.1">
    <property type="nucleotide sequence ID" value="NC_000868.1"/>
</dbReference>
<dbReference type="SMR" id="Q9V120"/>
<dbReference type="STRING" id="272844.PAB0419"/>
<dbReference type="KEGG" id="pab:PAB0419"/>
<dbReference type="PATRIC" id="fig|272844.11.peg.647"/>
<dbReference type="eggNOG" id="arCOG00678">
    <property type="taxonomic scope" value="Archaea"/>
</dbReference>
<dbReference type="HOGENOM" id="CLU_071769_0_0_2"/>
<dbReference type="OrthoDB" id="35160at2157"/>
<dbReference type="PhylomeDB" id="Q9V120"/>
<dbReference type="Proteomes" id="UP000000810">
    <property type="component" value="Chromosome"/>
</dbReference>
<dbReference type="Proteomes" id="UP000009139">
    <property type="component" value="Chromosome"/>
</dbReference>
<dbReference type="GO" id="GO:0005737">
    <property type="term" value="C:cytoplasm"/>
    <property type="evidence" value="ECO:0007669"/>
    <property type="project" value="UniProtKB-SubCell"/>
</dbReference>
<dbReference type="GO" id="GO:0000178">
    <property type="term" value="C:exosome (RNase complex)"/>
    <property type="evidence" value="ECO:0007669"/>
    <property type="project" value="UniProtKB-KW"/>
</dbReference>
<dbReference type="GO" id="GO:0008143">
    <property type="term" value="F:poly(A) binding"/>
    <property type="evidence" value="ECO:0007669"/>
    <property type="project" value="InterPro"/>
</dbReference>
<dbReference type="GO" id="GO:0071034">
    <property type="term" value="P:CUT catabolic process"/>
    <property type="evidence" value="ECO:0007669"/>
    <property type="project" value="TreeGrafter"/>
</dbReference>
<dbReference type="GO" id="GO:0000467">
    <property type="term" value="P:exonucleolytic trimming to generate mature 3'-end of 5.8S rRNA from tricistronic rRNA transcript (SSU-rRNA, 5.8S rRNA, LSU-rRNA)"/>
    <property type="evidence" value="ECO:0007669"/>
    <property type="project" value="TreeGrafter"/>
</dbReference>
<dbReference type="GO" id="GO:0071051">
    <property type="term" value="P:poly(A)-dependent snoRNA 3'-end processing"/>
    <property type="evidence" value="ECO:0007669"/>
    <property type="project" value="TreeGrafter"/>
</dbReference>
<dbReference type="GO" id="GO:0006401">
    <property type="term" value="P:RNA catabolic process"/>
    <property type="evidence" value="ECO:0007669"/>
    <property type="project" value="UniProtKB-UniRule"/>
</dbReference>
<dbReference type="GO" id="GO:0034475">
    <property type="term" value="P:U4 snRNA 3'-end processing"/>
    <property type="evidence" value="ECO:0007669"/>
    <property type="project" value="TreeGrafter"/>
</dbReference>
<dbReference type="CDD" id="cd22524">
    <property type="entry name" value="KH-I_Rrp4_prokar"/>
    <property type="match status" value="1"/>
</dbReference>
<dbReference type="CDD" id="cd05789">
    <property type="entry name" value="S1_Rrp4"/>
    <property type="match status" value="1"/>
</dbReference>
<dbReference type="Gene3D" id="2.40.50.100">
    <property type="match status" value="1"/>
</dbReference>
<dbReference type="Gene3D" id="3.30.1370.10">
    <property type="entry name" value="K Homology domain, type 1"/>
    <property type="match status" value="1"/>
</dbReference>
<dbReference type="Gene3D" id="2.40.50.140">
    <property type="entry name" value="Nucleic acid-binding proteins"/>
    <property type="match status" value="1"/>
</dbReference>
<dbReference type="HAMAP" id="MF_00623">
    <property type="entry name" value="Exosome_Rrp4"/>
    <property type="match status" value="1"/>
</dbReference>
<dbReference type="InterPro" id="IPR026699">
    <property type="entry name" value="Exosome_RNA_bind1/RRP40/RRP4"/>
</dbReference>
<dbReference type="InterPro" id="IPR004087">
    <property type="entry name" value="KH_dom"/>
</dbReference>
<dbReference type="InterPro" id="IPR004088">
    <property type="entry name" value="KH_dom_type_1"/>
</dbReference>
<dbReference type="InterPro" id="IPR036612">
    <property type="entry name" value="KH_dom_type_1_sf"/>
</dbReference>
<dbReference type="InterPro" id="IPR012340">
    <property type="entry name" value="NA-bd_OB-fold"/>
</dbReference>
<dbReference type="InterPro" id="IPR023474">
    <property type="entry name" value="Rrp4"/>
</dbReference>
<dbReference type="InterPro" id="IPR054371">
    <property type="entry name" value="RRP4_N"/>
</dbReference>
<dbReference type="InterPro" id="IPR048565">
    <property type="entry name" value="RRP4_S1"/>
</dbReference>
<dbReference type="InterPro" id="IPR003029">
    <property type="entry name" value="S1_domain"/>
</dbReference>
<dbReference type="NCBIfam" id="NF003181">
    <property type="entry name" value="PRK04163.1-1"/>
    <property type="match status" value="1"/>
</dbReference>
<dbReference type="PANTHER" id="PTHR21321:SF4">
    <property type="entry name" value="EXOSOME COMPLEX COMPONENT RRP4"/>
    <property type="match status" value="1"/>
</dbReference>
<dbReference type="PANTHER" id="PTHR21321">
    <property type="entry name" value="PNAS-3 RELATED"/>
    <property type="match status" value="1"/>
</dbReference>
<dbReference type="Pfam" id="PF22625">
    <property type="entry name" value="ECR1_N_2"/>
    <property type="match status" value="1"/>
</dbReference>
<dbReference type="Pfam" id="PF15985">
    <property type="entry name" value="KH_6"/>
    <property type="match status" value="1"/>
</dbReference>
<dbReference type="Pfam" id="PF21266">
    <property type="entry name" value="RRP4_S1"/>
    <property type="match status" value="1"/>
</dbReference>
<dbReference type="SMART" id="SM00322">
    <property type="entry name" value="KH"/>
    <property type="match status" value="1"/>
</dbReference>
<dbReference type="SMART" id="SM00316">
    <property type="entry name" value="S1"/>
    <property type="match status" value="1"/>
</dbReference>
<dbReference type="SUPFAM" id="SSF50249">
    <property type="entry name" value="Nucleic acid-binding proteins"/>
    <property type="match status" value="1"/>
</dbReference>
<dbReference type="SUPFAM" id="SSF110324">
    <property type="entry name" value="Ribosomal L27 protein-like"/>
    <property type="match status" value="1"/>
</dbReference>
<dbReference type="PROSITE" id="PS50084">
    <property type="entry name" value="KH_TYPE_1"/>
    <property type="match status" value="1"/>
</dbReference>
<dbReference type="PROSITE" id="PS50126">
    <property type="entry name" value="S1"/>
    <property type="match status" value="1"/>
</dbReference>
<sequence>MKRIFVQNRELVVPGTLLAQGPYKNGRGTFREGSRIYSTVIGLVDIKGNTIRVIPLEGPYIPEVGDNVIGKIVDVKFSSWVVDIGAPYPANLKIQDFTDEKIDLLRTDLRKFFDIGDIIYAKVKAITEVNNIDLTTKGMPFNGGPLKGGQIVKITPSRVPRVIGRGGSMINMIKKLTMTRIIVGQNGWIWVSGKNDALEKLAIEAILKIDKESHTRGLTDRIKALLLSRLQELKEKGVIEEIPKLEEEPQGEDEVNGNDGEARGA</sequence>
<evidence type="ECO:0000255" key="1">
    <source>
        <dbReference type="HAMAP-Rule" id="MF_00623"/>
    </source>
</evidence>
<evidence type="ECO:0000256" key="2">
    <source>
        <dbReference type="SAM" id="MobiDB-lite"/>
    </source>
</evidence>
<proteinExistence type="inferred from homology"/>
<feature type="chain" id="PRO_0000050150" description="Exosome complex component Rrp4">
    <location>
        <begin position="1"/>
        <end position="265"/>
    </location>
</feature>
<feature type="domain" description="S1 motif" evidence="1">
    <location>
        <begin position="65"/>
        <end position="137"/>
    </location>
</feature>
<feature type="domain" description="KH" evidence="1">
    <location>
        <begin position="147"/>
        <end position="205"/>
    </location>
</feature>
<feature type="region of interest" description="Disordered" evidence="2">
    <location>
        <begin position="241"/>
        <end position="265"/>
    </location>
</feature>
<protein>
    <recommendedName>
        <fullName evidence="1">Exosome complex component Rrp4</fullName>
    </recommendedName>
</protein>